<evidence type="ECO:0000255" key="1">
    <source>
        <dbReference type="HAMAP-Rule" id="MF_00375"/>
    </source>
</evidence>
<dbReference type="EC" id="5.4.3.8" evidence="1"/>
<dbReference type="EMBL" id="CP000386">
    <property type="protein sequence ID" value="ABG04922.1"/>
    <property type="molecule type" value="Genomic_DNA"/>
</dbReference>
<dbReference type="RefSeq" id="WP_011564937.1">
    <property type="nucleotide sequence ID" value="NC_008148.1"/>
</dbReference>
<dbReference type="SMR" id="Q1AUK6"/>
<dbReference type="STRING" id="266117.Rxyl_1975"/>
<dbReference type="KEGG" id="rxy:Rxyl_1975"/>
<dbReference type="eggNOG" id="COG0001">
    <property type="taxonomic scope" value="Bacteria"/>
</dbReference>
<dbReference type="HOGENOM" id="CLU_016922_1_5_11"/>
<dbReference type="OrthoDB" id="9801052at2"/>
<dbReference type="PhylomeDB" id="Q1AUK6"/>
<dbReference type="UniPathway" id="UPA00251">
    <property type="reaction ID" value="UER00317"/>
</dbReference>
<dbReference type="Proteomes" id="UP000006637">
    <property type="component" value="Chromosome"/>
</dbReference>
<dbReference type="GO" id="GO:0005737">
    <property type="term" value="C:cytoplasm"/>
    <property type="evidence" value="ECO:0007669"/>
    <property type="project" value="UniProtKB-SubCell"/>
</dbReference>
<dbReference type="GO" id="GO:0042286">
    <property type="term" value="F:glutamate-1-semialdehyde 2,1-aminomutase activity"/>
    <property type="evidence" value="ECO:0007669"/>
    <property type="project" value="UniProtKB-UniRule"/>
</dbReference>
<dbReference type="GO" id="GO:0030170">
    <property type="term" value="F:pyridoxal phosphate binding"/>
    <property type="evidence" value="ECO:0007669"/>
    <property type="project" value="InterPro"/>
</dbReference>
<dbReference type="GO" id="GO:0008483">
    <property type="term" value="F:transaminase activity"/>
    <property type="evidence" value="ECO:0007669"/>
    <property type="project" value="InterPro"/>
</dbReference>
<dbReference type="GO" id="GO:0006782">
    <property type="term" value="P:protoporphyrinogen IX biosynthetic process"/>
    <property type="evidence" value="ECO:0007669"/>
    <property type="project" value="UniProtKB-UniRule"/>
</dbReference>
<dbReference type="CDD" id="cd00610">
    <property type="entry name" value="OAT_like"/>
    <property type="match status" value="1"/>
</dbReference>
<dbReference type="FunFam" id="3.40.640.10:FF:000021">
    <property type="entry name" value="Glutamate-1-semialdehyde 2,1-aminomutase"/>
    <property type="match status" value="1"/>
</dbReference>
<dbReference type="Gene3D" id="3.90.1150.10">
    <property type="entry name" value="Aspartate Aminotransferase, domain 1"/>
    <property type="match status" value="1"/>
</dbReference>
<dbReference type="Gene3D" id="3.40.640.10">
    <property type="entry name" value="Type I PLP-dependent aspartate aminotransferase-like (Major domain)"/>
    <property type="match status" value="1"/>
</dbReference>
<dbReference type="HAMAP" id="MF_00375">
    <property type="entry name" value="HemL_aminotrans_3"/>
    <property type="match status" value="1"/>
</dbReference>
<dbReference type="InterPro" id="IPR004639">
    <property type="entry name" value="4pyrrol_synth_GluAld_NH2Trfase"/>
</dbReference>
<dbReference type="InterPro" id="IPR005814">
    <property type="entry name" value="Aminotrans_3"/>
</dbReference>
<dbReference type="InterPro" id="IPR049704">
    <property type="entry name" value="Aminotrans_3_PPA_site"/>
</dbReference>
<dbReference type="InterPro" id="IPR015424">
    <property type="entry name" value="PyrdxlP-dep_Trfase"/>
</dbReference>
<dbReference type="InterPro" id="IPR015421">
    <property type="entry name" value="PyrdxlP-dep_Trfase_major"/>
</dbReference>
<dbReference type="InterPro" id="IPR015422">
    <property type="entry name" value="PyrdxlP-dep_Trfase_small"/>
</dbReference>
<dbReference type="NCBIfam" id="TIGR00713">
    <property type="entry name" value="hemL"/>
    <property type="match status" value="1"/>
</dbReference>
<dbReference type="NCBIfam" id="NF000818">
    <property type="entry name" value="PRK00062.1"/>
    <property type="match status" value="1"/>
</dbReference>
<dbReference type="PANTHER" id="PTHR43713">
    <property type="entry name" value="GLUTAMATE-1-SEMIALDEHYDE 2,1-AMINOMUTASE"/>
    <property type="match status" value="1"/>
</dbReference>
<dbReference type="PANTHER" id="PTHR43713:SF3">
    <property type="entry name" value="GLUTAMATE-1-SEMIALDEHYDE 2,1-AMINOMUTASE 1, CHLOROPLASTIC-RELATED"/>
    <property type="match status" value="1"/>
</dbReference>
<dbReference type="Pfam" id="PF00202">
    <property type="entry name" value="Aminotran_3"/>
    <property type="match status" value="1"/>
</dbReference>
<dbReference type="SUPFAM" id="SSF53383">
    <property type="entry name" value="PLP-dependent transferases"/>
    <property type="match status" value="1"/>
</dbReference>
<dbReference type="PROSITE" id="PS00600">
    <property type="entry name" value="AA_TRANSFER_CLASS_3"/>
    <property type="match status" value="1"/>
</dbReference>
<feature type="chain" id="PRO_0000382364" description="Glutamate-1-semialdehyde 2,1-aminomutase">
    <location>
        <begin position="1"/>
        <end position="439"/>
    </location>
</feature>
<feature type="modified residue" description="N6-(pyridoxal phosphate)lysine" evidence="1">
    <location>
        <position position="277"/>
    </location>
</feature>
<organism>
    <name type="scientific">Rubrobacter xylanophilus (strain DSM 9941 / JCM 11954 / NBRC 16129 / PRD-1)</name>
    <dbReference type="NCBI Taxonomy" id="266117"/>
    <lineage>
        <taxon>Bacteria</taxon>
        <taxon>Bacillati</taxon>
        <taxon>Actinomycetota</taxon>
        <taxon>Rubrobacteria</taxon>
        <taxon>Rubrobacterales</taxon>
        <taxon>Rubrobacteraceae</taxon>
        <taxon>Rubrobacter</taxon>
    </lineage>
</organism>
<accession>Q1AUK6</accession>
<gene>
    <name evidence="1" type="primary">hemL</name>
    <name type="ordered locus">Rxyl_1975</name>
</gene>
<reference key="1">
    <citation type="submission" date="2006-06" db="EMBL/GenBank/DDBJ databases">
        <title>Complete sequence of Rubrobacter xylanophilus DSM 9941.</title>
        <authorList>
            <consortium name="US DOE Joint Genome Institute"/>
            <person name="Copeland A."/>
            <person name="Lucas S."/>
            <person name="Lapidus A."/>
            <person name="Barry K."/>
            <person name="Detter J.C."/>
            <person name="Glavina del Rio T."/>
            <person name="Hammon N."/>
            <person name="Israni S."/>
            <person name="Dalin E."/>
            <person name="Tice H."/>
            <person name="Pitluck S."/>
            <person name="Munk A.C."/>
            <person name="Brettin T."/>
            <person name="Bruce D."/>
            <person name="Han C."/>
            <person name="Tapia R."/>
            <person name="Gilna P."/>
            <person name="Schmutz J."/>
            <person name="Larimer F."/>
            <person name="Land M."/>
            <person name="Hauser L."/>
            <person name="Kyrpides N."/>
            <person name="Lykidis A."/>
            <person name="da Costa M.S."/>
            <person name="Rainey F.A."/>
            <person name="Empadinhas N."/>
            <person name="Jolivet E."/>
            <person name="Battista J.R."/>
            <person name="Richardson P."/>
        </authorList>
    </citation>
    <scope>NUCLEOTIDE SEQUENCE [LARGE SCALE GENOMIC DNA]</scope>
    <source>
        <strain>DSM 9941 / JCM 11954 / NBRC 16129 / PRD-1</strain>
    </source>
</reference>
<comment type="catalytic activity">
    <reaction evidence="1">
        <text>(S)-4-amino-5-oxopentanoate = 5-aminolevulinate</text>
        <dbReference type="Rhea" id="RHEA:14265"/>
        <dbReference type="ChEBI" id="CHEBI:57501"/>
        <dbReference type="ChEBI" id="CHEBI:356416"/>
        <dbReference type="EC" id="5.4.3.8"/>
    </reaction>
</comment>
<comment type="cofactor">
    <cofactor evidence="1">
        <name>pyridoxal 5'-phosphate</name>
        <dbReference type="ChEBI" id="CHEBI:597326"/>
    </cofactor>
</comment>
<comment type="pathway">
    <text evidence="1">Porphyrin-containing compound metabolism; protoporphyrin-IX biosynthesis; 5-aminolevulinate from L-glutamyl-tRNA(Glu): step 2/2.</text>
</comment>
<comment type="subunit">
    <text evidence="1">Homodimer.</text>
</comment>
<comment type="subcellular location">
    <subcellularLocation>
        <location evidence="1">Cytoplasm</location>
    </subcellularLocation>
</comment>
<comment type="similarity">
    <text evidence="1">Belongs to the class-III pyridoxal-phosphate-dependent aminotransferase family. HemL subfamily.</text>
</comment>
<sequence>MSGLQEARLRLARDRSARLMERAVRRMPGGVNSPVRAFRSVGGDPLFMERGEGPRIFDADGNAYIDYVMSYGPLLLGHAPPEVVGAVERAARRGTTFGAPTRLEVELAELVCEAVPSVEVVRMVNSGTEATMSAVRLARGYTGREKILKFDGNYHGHGDALLVSAGSGVATLGLPDSPGVTPGAARDTAVLPYNDLEAVRELFEERGEEFAAVILEPVAGNMGCIPPEEGFLEGLREITAACGALLIFDEVMTGFRVSRGGAQERYGVVPDLTCLGKVIGGGLPVGAYGGRREIMERVAPAGPVYQAGTLSGNPLAMSAGLATLRRTGEPGFYERLEELGARWERGMREAASGSAVPVTVNRVGSMVSLFFASGPVRDFASAAASDAELFKDFFWHMLSRGVYLAPSQYEAGFISLAHSEEEIDRTVEAAAEWFAGRRA</sequence>
<name>GSA_RUBXD</name>
<proteinExistence type="inferred from homology"/>
<keyword id="KW-0963">Cytoplasm</keyword>
<keyword id="KW-0413">Isomerase</keyword>
<keyword id="KW-0627">Porphyrin biosynthesis</keyword>
<keyword id="KW-0663">Pyridoxal phosphate</keyword>
<keyword id="KW-1185">Reference proteome</keyword>
<protein>
    <recommendedName>
        <fullName evidence="1">Glutamate-1-semialdehyde 2,1-aminomutase</fullName>
        <shortName evidence="1">GSA</shortName>
        <ecNumber evidence="1">5.4.3.8</ecNumber>
    </recommendedName>
    <alternativeName>
        <fullName evidence="1">Glutamate-1-semialdehyde aminotransferase</fullName>
        <shortName evidence="1">GSA-AT</shortName>
    </alternativeName>
</protein>